<sequence length="268" mass="28533">MNAHVPPESVSAAEDSWTVAGRTFRSRLIVGTGKYKDYATNAAAAKAAGAEIVTVAVRRVNLTDPTQPLLIDYVKPTEFTYLPNTAGCFTGEDAVRTLRLAREAGGWDLVKLEVLSDPKTLYPDMEETLRSLKLLVSEGFQVMVYCSDDPVYARKLEEAGAVAIMPLGAPIGSGLGIQNRVNLRIIVENAGVPVLVDAGVGTASDAAIGMELGCDAILMNTAIAEAKDPIRMARAMKHAVIAGREAYLAGRMQKRLYADPSSPLGGLI</sequence>
<protein>
    <recommendedName>
        <fullName evidence="1">Thiazole synthase</fullName>
        <ecNumber evidence="1">2.8.1.10</ecNumber>
    </recommendedName>
</protein>
<keyword id="KW-0963">Cytoplasm</keyword>
<keyword id="KW-0704">Schiff base</keyword>
<keyword id="KW-0784">Thiamine biosynthesis</keyword>
<keyword id="KW-0808">Transferase</keyword>
<name>THIG_CAUSK</name>
<proteinExistence type="inferred from homology"/>
<comment type="function">
    <text evidence="1">Catalyzes the rearrangement of 1-deoxy-D-xylulose 5-phosphate (DXP) to produce the thiazole phosphate moiety of thiamine. Sulfur is provided by the thiocarboxylate moiety of the carrier protein ThiS. In vitro, sulfur can be provided by H(2)S.</text>
</comment>
<comment type="catalytic activity">
    <reaction evidence="1">
        <text>[ThiS sulfur-carrier protein]-C-terminal-Gly-aminoethanethioate + 2-iminoacetate + 1-deoxy-D-xylulose 5-phosphate = [ThiS sulfur-carrier protein]-C-terminal Gly-Gly + 2-[(2R,5Z)-2-carboxy-4-methylthiazol-5(2H)-ylidene]ethyl phosphate + 2 H2O + H(+)</text>
        <dbReference type="Rhea" id="RHEA:26297"/>
        <dbReference type="Rhea" id="RHEA-COMP:12909"/>
        <dbReference type="Rhea" id="RHEA-COMP:19908"/>
        <dbReference type="ChEBI" id="CHEBI:15377"/>
        <dbReference type="ChEBI" id="CHEBI:15378"/>
        <dbReference type="ChEBI" id="CHEBI:57792"/>
        <dbReference type="ChEBI" id="CHEBI:62899"/>
        <dbReference type="ChEBI" id="CHEBI:77846"/>
        <dbReference type="ChEBI" id="CHEBI:90778"/>
        <dbReference type="ChEBI" id="CHEBI:232372"/>
        <dbReference type="EC" id="2.8.1.10"/>
    </reaction>
</comment>
<comment type="pathway">
    <text evidence="1">Cofactor biosynthesis; thiamine diphosphate biosynthesis.</text>
</comment>
<comment type="subunit">
    <text evidence="1">Homotetramer. Forms heterodimers with either ThiH or ThiS.</text>
</comment>
<comment type="subcellular location">
    <subcellularLocation>
        <location evidence="1">Cytoplasm</location>
    </subcellularLocation>
</comment>
<comment type="similarity">
    <text evidence="1">Belongs to the ThiG family.</text>
</comment>
<reference key="1">
    <citation type="submission" date="2008-01" db="EMBL/GenBank/DDBJ databases">
        <title>Complete sequence of chromosome of Caulobacter sp. K31.</title>
        <authorList>
            <consortium name="US DOE Joint Genome Institute"/>
            <person name="Copeland A."/>
            <person name="Lucas S."/>
            <person name="Lapidus A."/>
            <person name="Barry K."/>
            <person name="Glavina del Rio T."/>
            <person name="Dalin E."/>
            <person name="Tice H."/>
            <person name="Pitluck S."/>
            <person name="Bruce D."/>
            <person name="Goodwin L."/>
            <person name="Thompson L.S."/>
            <person name="Brettin T."/>
            <person name="Detter J.C."/>
            <person name="Han C."/>
            <person name="Schmutz J."/>
            <person name="Larimer F."/>
            <person name="Land M."/>
            <person name="Hauser L."/>
            <person name="Kyrpides N."/>
            <person name="Kim E."/>
            <person name="Stephens C."/>
            <person name="Richardson P."/>
        </authorList>
    </citation>
    <scope>NUCLEOTIDE SEQUENCE [LARGE SCALE GENOMIC DNA]</scope>
    <source>
        <strain>K31</strain>
    </source>
</reference>
<dbReference type="EC" id="2.8.1.10" evidence="1"/>
<dbReference type="EMBL" id="CP000927">
    <property type="protein sequence ID" value="ABZ71695.1"/>
    <property type="molecule type" value="Genomic_DNA"/>
</dbReference>
<dbReference type="SMR" id="B0SXB0"/>
<dbReference type="STRING" id="366602.Caul_2568"/>
<dbReference type="KEGG" id="cak:Caul_2568"/>
<dbReference type="eggNOG" id="COG2022">
    <property type="taxonomic scope" value="Bacteria"/>
</dbReference>
<dbReference type="HOGENOM" id="CLU_062233_1_0_5"/>
<dbReference type="OrthoDB" id="9805935at2"/>
<dbReference type="UniPathway" id="UPA00060"/>
<dbReference type="GO" id="GO:0005737">
    <property type="term" value="C:cytoplasm"/>
    <property type="evidence" value="ECO:0007669"/>
    <property type="project" value="UniProtKB-SubCell"/>
</dbReference>
<dbReference type="GO" id="GO:1990107">
    <property type="term" value="F:thiazole synthase activity"/>
    <property type="evidence" value="ECO:0007669"/>
    <property type="project" value="UniProtKB-EC"/>
</dbReference>
<dbReference type="GO" id="GO:0009229">
    <property type="term" value="P:thiamine diphosphate biosynthetic process"/>
    <property type="evidence" value="ECO:0007669"/>
    <property type="project" value="UniProtKB-UniRule"/>
</dbReference>
<dbReference type="CDD" id="cd04728">
    <property type="entry name" value="ThiG"/>
    <property type="match status" value="1"/>
</dbReference>
<dbReference type="Gene3D" id="3.20.20.70">
    <property type="entry name" value="Aldolase class I"/>
    <property type="match status" value="1"/>
</dbReference>
<dbReference type="HAMAP" id="MF_00443">
    <property type="entry name" value="ThiG"/>
    <property type="match status" value="1"/>
</dbReference>
<dbReference type="InterPro" id="IPR013785">
    <property type="entry name" value="Aldolase_TIM"/>
</dbReference>
<dbReference type="InterPro" id="IPR033983">
    <property type="entry name" value="Thiazole_synthase_ThiG"/>
</dbReference>
<dbReference type="InterPro" id="IPR008867">
    <property type="entry name" value="ThiG"/>
</dbReference>
<dbReference type="PANTHER" id="PTHR34266">
    <property type="entry name" value="THIAZOLE SYNTHASE"/>
    <property type="match status" value="1"/>
</dbReference>
<dbReference type="PANTHER" id="PTHR34266:SF2">
    <property type="entry name" value="THIAZOLE SYNTHASE"/>
    <property type="match status" value="1"/>
</dbReference>
<dbReference type="Pfam" id="PF05690">
    <property type="entry name" value="ThiG"/>
    <property type="match status" value="1"/>
</dbReference>
<dbReference type="SUPFAM" id="SSF110399">
    <property type="entry name" value="ThiG-like"/>
    <property type="match status" value="1"/>
</dbReference>
<feature type="chain" id="PRO_1000080867" description="Thiazole synthase">
    <location>
        <begin position="1"/>
        <end position="268"/>
    </location>
</feature>
<feature type="active site" description="Schiff-base intermediate with DXP" evidence="1">
    <location>
        <position position="111"/>
    </location>
</feature>
<feature type="binding site" evidence="1">
    <location>
        <position position="172"/>
    </location>
    <ligand>
        <name>1-deoxy-D-xylulose 5-phosphate</name>
        <dbReference type="ChEBI" id="CHEBI:57792"/>
    </ligand>
</feature>
<feature type="binding site" evidence="1">
    <location>
        <begin position="198"/>
        <end position="199"/>
    </location>
    <ligand>
        <name>1-deoxy-D-xylulose 5-phosphate</name>
        <dbReference type="ChEBI" id="CHEBI:57792"/>
    </ligand>
</feature>
<feature type="binding site" evidence="1">
    <location>
        <begin position="220"/>
        <end position="221"/>
    </location>
    <ligand>
        <name>1-deoxy-D-xylulose 5-phosphate</name>
        <dbReference type="ChEBI" id="CHEBI:57792"/>
    </ligand>
</feature>
<organism>
    <name type="scientific">Caulobacter sp. (strain K31)</name>
    <dbReference type="NCBI Taxonomy" id="366602"/>
    <lineage>
        <taxon>Bacteria</taxon>
        <taxon>Pseudomonadati</taxon>
        <taxon>Pseudomonadota</taxon>
        <taxon>Alphaproteobacteria</taxon>
        <taxon>Caulobacterales</taxon>
        <taxon>Caulobacteraceae</taxon>
        <taxon>Caulobacter</taxon>
    </lineage>
</organism>
<evidence type="ECO:0000255" key="1">
    <source>
        <dbReference type="HAMAP-Rule" id="MF_00443"/>
    </source>
</evidence>
<gene>
    <name evidence="1" type="primary">thiG</name>
    <name type="ordered locus">Caul_2568</name>
</gene>
<accession>B0SXB0</accession>